<comment type="function">
    <text evidence="1">Required for the formation of a threonylcarbamoyl group on adenosine at position 37 (t(6)A37) in tRNAs that read codons beginning with adenine. Is involved in the transfer of the threonylcarbamoyl moiety of threonylcarbamoyl-AMP (TC-AMP) to the N6 group of A37, together with TsaE and TsaB. TsaD likely plays a direct catalytic role in this reaction.</text>
</comment>
<comment type="catalytic activity">
    <reaction evidence="1">
        <text>L-threonylcarbamoyladenylate + adenosine(37) in tRNA = N(6)-L-threonylcarbamoyladenosine(37) in tRNA + AMP + H(+)</text>
        <dbReference type="Rhea" id="RHEA:37059"/>
        <dbReference type="Rhea" id="RHEA-COMP:10162"/>
        <dbReference type="Rhea" id="RHEA-COMP:10163"/>
        <dbReference type="ChEBI" id="CHEBI:15378"/>
        <dbReference type="ChEBI" id="CHEBI:73682"/>
        <dbReference type="ChEBI" id="CHEBI:74411"/>
        <dbReference type="ChEBI" id="CHEBI:74418"/>
        <dbReference type="ChEBI" id="CHEBI:456215"/>
        <dbReference type="EC" id="2.3.1.234"/>
    </reaction>
</comment>
<comment type="cofactor">
    <cofactor evidence="1">
        <name>Fe(2+)</name>
        <dbReference type="ChEBI" id="CHEBI:29033"/>
    </cofactor>
    <text evidence="1">Binds 1 Fe(2+) ion per subunit.</text>
</comment>
<comment type="subcellular location">
    <subcellularLocation>
        <location evidence="1">Cytoplasm</location>
    </subcellularLocation>
</comment>
<comment type="similarity">
    <text evidence="1">Belongs to the KAE1 / TsaD family.</text>
</comment>
<comment type="sequence caution" evidence="2">
    <conflict type="erroneous initiation">
        <sequence resource="EMBL-CDS" id="ABC92649"/>
    </conflict>
</comment>
<proteinExistence type="inferred from homology"/>
<name>TSAD_RHIEC</name>
<reference key="1">
    <citation type="journal article" date="2006" name="Proc. Natl. Acad. Sci. U.S.A.">
        <title>The partitioned Rhizobium etli genome: genetic and metabolic redundancy in seven interacting replicons.</title>
        <authorList>
            <person name="Gonzalez V."/>
            <person name="Santamaria R.I."/>
            <person name="Bustos P."/>
            <person name="Hernandez-Gonzalez I."/>
            <person name="Medrano-Soto A."/>
            <person name="Moreno-Hagelsieb G."/>
            <person name="Janga S.C."/>
            <person name="Ramirez M.A."/>
            <person name="Jimenez-Jacinto V."/>
            <person name="Collado-Vides J."/>
            <person name="Davila G."/>
        </authorList>
    </citation>
    <scope>NUCLEOTIDE SEQUENCE [LARGE SCALE GENOMIC DNA]</scope>
    <source>
        <strain>ATCC 51251 / DSM 11541 / JCM 21823 / NBRC 15573 / CFN 42</strain>
    </source>
</reference>
<keyword id="KW-0012">Acyltransferase</keyword>
<keyword id="KW-0963">Cytoplasm</keyword>
<keyword id="KW-0408">Iron</keyword>
<keyword id="KW-0479">Metal-binding</keyword>
<keyword id="KW-1185">Reference proteome</keyword>
<keyword id="KW-0808">Transferase</keyword>
<keyword id="KW-0819">tRNA processing</keyword>
<feature type="chain" id="PRO_0000303507" description="tRNA N6-adenosine threonylcarbamoyltransferase">
    <location>
        <begin position="1"/>
        <end position="365"/>
    </location>
</feature>
<feature type="binding site" evidence="1">
    <location>
        <position position="119"/>
    </location>
    <ligand>
        <name>Fe cation</name>
        <dbReference type="ChEBI" id="CHEBI:24875"/>
    </ligand>
</feature>
<feature type="binding site" evidence="1">
    <location>
        <position position="123"/>
    </location>
    <ligand>
        <name>Fe cation</name>
        <dbReference type="ChEBI" id="CHEBI:24875"/>
    </ligand>
</feature>
<feature type="binding site" evidence="1">
    <location>
        <begin position="141"/>
        <end position="145"/>
    </location>
    <ligand>
        <name>substrate</name>
    </ligand>
</feature>
<feature type="binding site" evidence="1">
    <location>
        <position position="174"/>
    </location>
    <ligand>
        <name>substrate</name>
    </ligand>
</feature>
<feature type="binding site" evidence="1">
    <location>
        <position position="187"/>
    </location>
    <ligand>
        <name>substrate</name>
    </ligand>
</feature>
<feature type="binding site" evidence="1">
    <location>
        <position position="288"/>
    </location>
    <ligand>
        <name>substrate</name>
    </ligand>
</feature>
<feature type="binding site" evidence="1">
    <location>
        <position position="316"/>
    </location>
    <ligand>
        <name>Fe cation</name>
        <dbReference type="ChEBI" id="CHEBI:24875"/>
    </ligand>
</feature>
<accession>Q2K3D7</accession>
<organism>
    <name type="scientific">Rhizobium etli (strain ATCC 51251 / DSM 11541 / JCM 21823 / NBRC 15573 / CFN 42)</name>
    <dbReference type="NCBI Taxonomy" id="347834"/>
    <lineage>
        <taxon>Bacteria</taxon>
        <taxon>Pseudomonadati</taxon>
        <taxon>Pseudomonadota</taxon>
        <taxon>Alphaproteobacteria</taxon>
        <taxon>Hyphomicrobiales</taxon>
        <taxon>Rhizobiaceae</taxon>
        <taxon>Rhizobium/Agrobacterium group</taxon>
        <taxon>Rhizobium</taxon>
    </lineage>
</organism>
<gene>
    <name evidence="1" type="primary">tsaD</name>
    <name type="synonym">gcp</name>
    <name type="ordered locus">RHE_CH03903</name>
</gene>
<evidence type="ECO:0000255" key="1">
    <source>
        <dbReference type="HAMAP-Rule" id="MF_01445"/>
    </source>
</evidence>
<evidence type="ECO:0000305" key="2"/>
<protein>
    <recommendedName>
        <fullName evidence="1">tRNA N6-adenosine threonylcarbamoyltransferase</fullName>
        <ecNumber evidence="1">2.3.1.234</ecNumber>
    </recommendedName>
    <alternativeName>
        <fullName evidence="1">N6-L-threonylcarbamoyladenine synthase</fullName>
        <shortName evidence="1">t(6)A synthase</shortName>
    </alternativeName>
    <alternativeName>
        <fullName evidence="1">t(6)A37 threonylcarbamoyladenosine biosynthesis protein TsaD</fullName>
    </alternativeName>
    <alternativeName>
        <fullName evidence="1">tRNA threonylcarbamoyladenosine biosynthesis protein TsaD</fullName>
    </alternativeName>
</protein>
<sequence length="365" mass="38766">MVPFMRILGIETSCDETAAAVVERNAEGHCNVLSDVVLSQLDEHSAYGGVVPEIAARAHVEALDELIEQALKRANVSLADVDAIAATSGPGLIGGLLVGLMTGKAIARAAGKPLYAINHLEGHALTARLTHGLSFPYLVLLVSGGHTQLILVRGVGQYERWGTTIDDALGEAFDKTAKLLGLPYPGGPAVERMARDGNADRFDFPRPLVGEARLDFSFSGLKTAVRQAAQDIAPLSDQDVADICASFQRAISRTLKDRIGRGLQRFKREFPATGEKPALVVAGGVAANLELRATLQALCDKNGFRFIAPPLSLCTDNAVMIAWAGLERMATGVAPDTLDVQPRSRWPLDANAETLIGFGKRGAKA</sequence>
<dbReference type="EC" id="2.3.1.234" evidence="1"/>
<dbReference type="EMBL" id="CP000133">
    <property type="protein sequence ID" value="ABC92649.1"/>
    <property type="status" value="ALT_INIT"/>
    <property type="molecule type" value="Genomic_DNA"/>
</dbReference>
<dbReference type="RefSeq" id="WP_042119075.1">
    <property type="nucleotide sequence ID" value="NC_007761.1"/>
</dbReference>
<dbReference type="SMR" id="Q2K3D7"/>
<dbReference type="KEGG" id="ret:RHE_CH03903"/>
<dbReference type="eggNOG" id="COG0533">
    <property type="taxonomic scope" value="Bacteria"/>
</dbReference>
<dbReference type="HOGENOM" id="CLU_023208_0_2_5"/>
<dbReference type="OrthoDB" id="9806197at2"/>
<dbReference type="Proteomes" id="UP000001936">
    <property type="component" value="Chromosome"/>
</dbReference>
<dbReference type="GO" id="GO:0005737">
    <property type="term" value="C:cytoplasm"/>
    <property type="evidence" value="ECO:0007669"/>
    <property type="project" value="UniProtKB-SubCell"/>
</dbReference>
<dbReference type="GO" id="GO:0005506">
    <property type="term" value="F:iron ion binding"/>
    <property type="evidence" value="ECO:0007669"/>
    <property type="project" value="UniProtKB-UniRule"/>
</dbReference>
<dbReference type="GO" id="GO:0061711">
    <property type="term" value="F:N(6)-L-threonylcarbamoyladenine synthase activity"/>
    <property type="evidence" value="ECO:0007669"/>
    <property type="project" value="UniProtKB-EC"/>
</dbReference>
<dbReference type="GO" id="GO:0002949">
    <property type="term" value="P:tRNA threonylcarbamoyladenosine modification"/>
    <property type="evidence" value="ECO:0007669"/>
    <property type="project" value="UniProtKB-UniRule"/>
</dbReference>
<dbReference type="CDD" id="cd24133">
    <property type="entry name" value="ASKHA_NBD_TsaD_bac"/>
    <property type="match status" value="1"/>
</dbReference>
<dbReference type="FunFam" id="3.30.420.40:FF:000012">
    <property type="entry name" value="tRNA N6-adenosine threonylcarbamoyltransferase"/>
    <property type="match status" value="1"/>
</dbReference>
<dbReference type="FunFam" id="3.30.420.40:FF:000040">
    <property type="entry name" value="tRNA N6-adenosine threonylcarbamoyltransferase"/>
    <property type="match status" value="1"/>
</dbReference>
<dbReference type="Gene3D" id="3.30.420.40">
    <property type="match status" value="2"/>
</dbReference>
<dbReference type="HAMAP" id="MF_01445">
    <property type="entry name" value="TsaD"/>
    <property type="match status" value="1"/>
</dbReference>
<dbReference type="InterPro" id="IPR043129">
    <property type="entry name" value="ATPase_NBD"/>
</dbReference>
<dbReference type="InterPro" id="IPR000905">
    <property type="entry name" value="Gcp-like_dom"/>
</dbReference>
<dbReference type="InterPro" id="IPR017861">
    <property type="entry name" value="KAE1/TsaD"/>
</dbReference>
<dbReference type="InterPro" id="IPR022450">
    <property type="entry name" value="TsaD"/>
</dbReference>
<dbReference type="NCBIfam" id="TIGR00329">
    <property type="entry name" value="gcp_kae1"/>
    <property type="match status" value="1"/>
</dbReference>
<dbReference type="NCBIfam" id="TIGR03723">
    <property type="entry name" value="T6A_TsaD_YgjD"/>
    <property type="match status" value="1"/>
</dbReference>
<dbReference type="PANTHER" id="PTHR11735">
    <property type="entry name" value="TRNA N6-ADENOSINE THREONYLCARBAMOYLTRANSFERASE"/>
    <property type="match status" value="1"/>
</dbReference>
<dbReference type="PANTHER" id="PTHR11735:SF6">
    <property type="entry name" value="TRNA N6-ADENOSINE THREONYLCARBAMOYLTRANSFERASE, MITOCHONDRIAL"/>
    <property type="match status" value="1"/>
</dbReference>
<dbReference type="Pfam" id="PF00814">
    <property type="entry name" value="TsaD"/>
    <property type="match status" value="1"/>
</dbReference>
<dbReference type="PRINTS" id="PR00789">
    <property type="entry name" value="OSIALOPTASE"/>
</dbReference>
<dbReference type="SUPFAM" id="SSF53067">
    <property type="entry name" value="Actin-like ATPase domain"/>
    <property type="match status" value="2"/>
</dbReference>